<evidence type="ECO:0000250" key="1"/>
<evidence type="ECO:0000255" key="2"/>
<evidence type="ECO:0000269" key="3">
    <source>
    </source>
</evidence>
<evidence type="ECO:0000305" key="4"/>
<proteinExistence type="evidence at transcript level"/>
<organism>
    <name type="scientific">Mus musculus</name>
    <name type="common">Mouse</name>
    <dbReference type="NCBI Taxonomy" id="10090"/>
    <lineage>
        <taxon>Eukaryota</taxon>
        <taxon>Metazoa</taxon>
        <taxon>Chordata</taxon>
        <taxon>Craniata</taxon>
        <taxon>Vertebrata</taxon>
        <taxon>Euteleostomi</taxon>
        <taxon>Mammalia</taxon>
        <taxon>Eutheria</taxon>
        <taxon>Euarchontoglires</taxon>
        <taxon>Glires</taxon>
        <taxon>Rodentia</taxon>
        <taxon>Myomorpha</taxon>
        <taxon>Muroidea</taxon>
        <taxon>Muridae</taxon>
        <taxon>Murinae</taxon>
        <taxon>Mus</taxon>
        <taxon>Mus</taxon>
    </lineage>
</organism>
<keyword id="KW-1015">Disulfide bond</keyword>
<keyword id="KW-0256">Endoplasmic reticulum</keyword>
<keyword id="KW-0325">Glycoprotein</keyword>
<keyword id="KW-0333">Golgi apparatus</keyword>
<keyword id="KW-1185">Reference proteome</keyword>
<keyword id="KW-0964">Secreted</keyword>
<keyword id="KW-0732">Signal</keyword>
<gene>
    <name type="primary">Fibin</name>
</gene>
<name>FIBIN_MOUSE</name>
<reference key="1">
    <citation type="journal article" date="2007" name="Dev. Biol.">
        <title>Fibin, a novel secreted lateral plate mesoderm signal, is essential for pectoral fin bud initiation in zebrafish.</title>
        <authorList>
            <person name="Wakahara T."/>
            <person name="Kusu N."/>
            <person name="Yamauchi H."/>
            <person name="Kimura I."/>
            <person name="Konishi M."/>
            <person name="Miyake A."/>
            <person name="Itoh N."/>
        </authorList>
    </citation>
    <scope>NUCLEOTIDE SEQUENCE [MRNA]</scope>
    <scope>DEVELOPMENTAL STAGE</scope>
</reference>
<reference key="2">
    <citation type="journal article" date="2005" name="Science">
        <title>The transcriptional landscape of the mammalian genome.</title>
        <authorList>
            <person name="Carninci P."/>
            <person name="Kasukawa T."/>
            <person name="Katayama S."/>
            <person name="Gough J."/>
            <person name="Frith M.C."/>
            <person name="Maeda N."/>
            <person name="Oyama R."/>
            <person name="Ravasi T."/>
            <person name="Lenhard B."/>
            <person name="Wells C."/>
            <person name="Kodzius R."/>
            <person name="Shimokawa K."/>
            <person name="Bajic V.B."/>
            <person name="Brenner S.E."/>
            <person name="Batalov S."/>
            <person name="Forrest A.R."/>
            <person name="Zavolan M."/>
            <person name="Davis M.J."/>
            <person name="Wilming L.G."/>
            <person name="Aidinis V."/>
            <person name="Allen J.E."/>
            <person name="Ambesi-Impiombato A."/>
            <person name="Apweiler R."/>
            <person name="Aturaliya R.N."/>
            <person name="Bailey T.L."/>
            <person name="Bansal M."/>
            <person name="Baxter L."/>
            <person name="Beisel K.W."/>
            <person name="Bersano T."/>
            <person name="Bono H."/>
            <person name="Chalk A.M."/>
            <person name="Chiu K.P."/>
            <person name="Choudhary V."/>
            <person name="Christoffels A."/>
            <person name="Clutterbuck D.R."/>
            <person name="Crowe M.L."/>
            <person name="Dalla E."/>
            <person name="Dalrymple B.P."/>
            <person name="de Bono B."/>
            <person name="Della Gatta G."/>
            <person name="di Bernardo D."/>
            <person name="Down T."/>
            <person name="Engstrom P."/>
            <person name="Fagiolini M."/>
            <person name="Faulkner G."/>
            <person name="Fletcher C.F."/>
            <person name="Fukushima T."/>
            <person name="Furuno M."/>
            <person name="Futaki S."/>
            <person name="Gariboldi M."/>
            <person name="Georgii-Hemming P."/>
            <person name="Gingeras T.R."/>
            <person name="Gojobori T."/>
            <person name="Green R.E."/>
            <person name="Gustincich S."/>
            <person name="Harbers M."/>
            <person name="Hayashi Y."/>
            <person name="Hensch T.K."/>
            <person name="Hirokawa N."/>
            <person name="Hill D."/>
            <person name="Huminiecki L."/>
            <person name="Iacono M."/>
            <person name="Ikeo K."/>
            <person name="Iwama A."/>
            <person name="Ishikawa T."/>
            <person name="Jakt M."/>
            <person name="Kanapin A."/>
            <person name="Katoh M."/>
            <person name="Kawasawa Y."/>
            <person name="Kelso J."/>
            <person name="Kitamura H."/>
            <person name="Kitano H."/>
            <person name="Kollias G."/>
            <person name="Krishnan S.P."/>
            <person name="Kruger A."/>
            <person name="Kummerfeld S.K."/>
            <person name="Kurochkin I.V."/>
            <person name="Lareau L.F."/>
            <person name="Lazarevic D."/>
            <person name="Lipovich L."/>
            <person name="Liu J."/>
            <person name="Liuni S."/>
            <person name="McWilliam S."/>
            <person name="Madan Babu M."/>
            <person name="Madera M."/>
            <person name="Marchionni L."/>
            <person name="Matsuda H."/>
            <person name="Matsuzawa S."/>
            <person name="Miki H."/>
            <person name="Mignone F."/>
            <person name="Miyake S."/>
            <person name="Morris K."/>
            <person name="Mottagui-Tabar S."/>
            <person name="Mulder N."/>
            <person name="Nakano N."/>
            <person name="Nakauchi H."/>
            <person name="Ng P."/>
            <person name="Nilsson R."/>
            <person name="Nishiguchi S."/>
            <person name="Nishikawa S."/>
            <person name="Nori F."/>
            <person name="Ohara O."/>
            <person name="Okazaki Y."/>
            <person name="Orlando V."/>
            <person name="Pang K.C."/>
            <person name="Pavan W.J."/>
            <person name="Pavesi G."/>
            <person name="Pesole G."/>
            <person name="Petrovsky N."/>
            <person name="Piazza S."/>
            <person name="Reed J."/>
            <person name="Reid J.F."/>
            <person name="Ring B.Z."/>
            <person name="Ringwald M."/>
            <person name="Rost B."/>
            <person name="Ruan Y."/>
            <person name="Salzberg S.L."/>
            <person name="Sandelin A."/>
            <person name="Schneider C."/>
            <person name="Schoenbach C."/>
            <person name="Sekiguchi K."/>
            <person name="Semple C.A."/>
            <person name="Seno S."/>
            <person name="Sessa L."/>
            <person name="Sheng Y."/>
            <person name="Shibata Y."/>
            <person name="Shimada H."/>
            <person name="Shimada K."/>
            <person name="Silva D."/>
            <person name="Sinclair B."/>
            <person name="Sperling S."/>
            <person name="Stupka E."/>
            <person name="Sugiura K."/>
            <person name="Sultana R."/>
            <person name="Takenaka Y."/>
            <person name="Taki K."/>
            <person name="Tammoja K."/>
            <person name="Tan S.L."/>
            <person name="Tang S."/>
            <person name="Taylor M.S."/>
            <person name="Tegner J."/>
            <person name="Teichmann S.A."/>
            <person name="Ueda H.R."/>
            <person name="van Nimwegen E."/>
            <person name="Verardo R."/>
            <person name="Wei C.L."/>
            <person name="Yagi K."/>
            <person name="Yamanishi H."/>
            <person name="Zabarovsky E."/>
            <person name="Zhu S."/>
            <person name="Zimmer A."/>
            <person name="Hide W."/>
            <person name="Bult C."/>
            <person name="Grimmond S.M."/>
            <person name="Teasdale R.D."/>
            <person name="Liu E.T."/>
            <person name="Brusic V."/>
            <person name="Quackenbush J."/>
            <person name="Wahlestedt C."/>
            <person name="Mattick J.S."/>
            <person name="Hume D.A."/>
            <person name="Kai C."/>
            <person name="Sasaki D."/>
            <person name="Tomaru Y."/>
            <person name="Fukuda S."/>
            <person name="Kanamori-Katayama M."/>
            <person name="Suzuki M."/>
            <person name="Aoki J."/>
            <person name="Arakawa T."/>
            <person name="Iida J."/>
            <person name="Imamura K."/>
            <person name="Itoh M."/>
            <person name="Kato T."/>
            <person name="Kawaji H."/>
            <person name="Kawagashira N."/>
            <person name="Kawashima T."/>
            <person name="Kojima M."/>
            <person name="Kondo S."/>
            <person name="Konno H."/>
            <person name="Nakano K."/>
            <person name="Ninomiya N."/>
            <person name="Nishio T."/>
            <person name="Okada M."/>
            <person name="Plessy C."/>
            <person name="Shibata K."/>
            <person name="Shiraki T."/>
            <person name="Suzuki S."/>
            <person name="Tagami M."/>
            <person name="Waki K."/>
            <person name="Watahiki A."/>
            <person name="Okamura-Oho Y."/>
            <person name="Suzuki H."/>
            <person name="Kawai J."/>
            <person name="Hayashizaki Y."/>
        </authorList>
    </citation>
    <scope>NUCLEOTIDE SEQUENCE [LARGE SCALE MRNA]</scope>
    <source>
        <strain>C57BL/6J</strain>
    </source>
</reference>
<reference key="3">
    <citation type="journal article" date="2009" name="PLoS Biol.">
        <title>Lineage-specific biology revealed by a finished genome assembly of the mouse.</title>
        <authorList>
            <person name="Church D.M."/>
            <person name="Goodstadt L."/>
            <person name="Hillier L.W."/>
            <person name="Zody M.C."/>
            <person name="Goldstein S."/>
            <person name="She X."/>
            <person name="Bult C.J."/>
            <person name="Agarwala R."/>
            <person name="Cherry J.L."/>
            <person name="DiCuccio M."/>
            <person name="Hlavina W."/>
            <person name="Kapustin Y."/>
            <person name="Meric P."/>
            <person name="Maglott D."/>
            <person name="Birtle Z."/>
            <person name="Marques A.C."/>
            <person name="Graves T."/>
            <person name="Zhou S."/>
            <person name="Teague B."/>
            <person name="Potamousis K."/>
            <person name="Churas C."/>
            <person name="Place M."/>
            <person name="Herschleb J."/>
            <person name="Runnheim R."/>
            <person name="Forrest D."/>
            <person name="Amos-Landgraf J."/>
            <person name="Schwartz D.C."/>
            <person name="Cheng Z."/>
            <person name="Lindblad-Toh K."/>
            <person name="Eichler E.E."/>
            <person name="Ponting C.P."/>
        </authorList>
    </citation>
    <scope>NUCLEOTIDE SEQUENCE [LARGE SCALE GENOMIC DNA]</scope>
    <source>
        <strain>C57BL/6J</strain>
    </source>
</reference>
<reference key="4">
    <citation type="journal article" date="2004" name="Genome Res.">
        <title>The status, quality, and expansion of the NIH full-length cDNA project: the Mammalian Gene Collection (MGC).</title>
        <authorList>
            <consortium name="The MGC Project Team"/>
        </authorList>
    </citation>
    <scope>NUCLEOTIDE SEQUENCE [LARGE SCALE MRNA]</scope>
    <source>
        <strain>FVB/N</strain>
        <tissue>Mammary tumor</tissue>
    </source>
</reference>
<sequence length="217" mass="24760">MVFPKLIWMGFFCHLCRGYFDGPLYPEMSNGTLHHYFVPDGDYEENDDPEKCQLLFRVSDRRRCSQGEGGQASSLLSLTLREEFTVLGRQVEDAGRVLEGISKSISYDLDGEESYGKYLRRESHQIGDAYSNSDKSLTELESKFKQGQEQDSRQESRLNEDFLGMLVHTRSLLKETLDISVGLRDKYELLAHTIRSHGTRLGRLKSDYLEGGAQKTG</sequence>
<accession>Q9CQS3</accession>
<dbReference type="EMBL" id="AB236893">
    <property type="protein sequence ID" value="BAF42655.1"/>
    <property type="molecule type" value="mRNA"/>
</dbReference>
<dbReference type="EMBL" id="AK003790">
    <property type="protein sequence ID" value="BAB22997.1"/>
    <property type="molecule type" value="mRNA"/>
</dbReference>
<dbReference type="EMBL" id="AK011548">
    <property type="protein sequence ID" value="BAB27691.1"/>
    <property type="molecule type" value="mRNA"/>
</dbReference>
<dbReference type="EMBL" id="AK012026">
    <property type="protein sequence ID" value="BAB27982.1"/>
    <property type="molecule type" value="mRNA"/>
</dbReference>
<dbReference type="EMBL" id="AK159648">
    <property type="protein sequence ID" value="BAE35260.1"/>
    <property type="molecule type" value="mRNA"/>
</dbReference>
<dbReference type="EMBL" id="AL691416">
    <property type="status" value="NOT_ANNOTATED_CDS"/>
    <property type="molecule type" value="Genomic_DNA"/>
</dbReference>
<dbReference type="EMBL" id="BC027250">
    <property type="protein sequence ID" value="AAH27250.1"/>
    <property type="molecule type" value="mRNA"/>
</dbReference>
<dbReference type="CCDS" id="CCDS16511.1"/>
<dbReference type="RefSeq" id="NP_080547.1">
    <property type="nucleotide sequence ID" value="NM_026271.1"/>
</dbReference>
<dbReference type="SMR" id="Q9CQS3"/>
<dbReference type="BioGRID" id="212307">
    <property type="interactions" value="2"/>
</dbReference>
<dbReference type="FunCoup" id="Q9CQS3">
    <property type="interactions" value="381"/>
</dbReference>
<dbReference type="STRING" id="10090.ENSMUSP00000097221"/>
<dbReference type="GlyCosmos" id="Q9CQS3">
    <property type="glycosylation" value="1 site, No reported glycans"/>
</dbReference>
<dbReference type="GlyGen" id="Q9CQS3">
    <property type="glycosylation" value="1 site"/>
</dbReference>
<dbReference type="PhosphoSitePlus" id="Q9CQS3"/>
<dbReference type="PaxDb" id="10090-ENSMUSP00000097221"/>
<dbReference type="ProteomicsDB" id="266844"/>
<dbReference type="Antibodypedia" id="25393">
    <property type="antibodies" value="59 antibodies from 17 providers"/>
</dbReference>
<dbReference type="DNASU" id="67606"/>
<dbReference type="Ensembl" id="ENSMUST00000099626.5">
    <property type="protein sequence ID" value="ENSMUSP00000097221.4"/>
    <property type="gene ID" value="ENSMUSG00000074971.5"/>
</dbReference>
<dbReference type="GeneID" id="67606"/>
<dbReference type="KEGG" id="mmu:67606"/>
<dbReference type="UCSC" id="uc008lmv.1">
    <property type="organism name" value="mouse"/>
</dbReference>
<dbReference type="AGR" id="MGI:1914856"/>
<dbReference type="CTD" id="387758"/>
<dbReference type="MGI" id="MGI:1914856">
    <property type="gene designation" value="Fibin"/>
</dbReference>
<dbReference type="VEuPathDB" id="HostDB:ENSMUSG00000074971"/>
<dbReference type="eggNOG" id="ENOG502QSW0">
    <property type="taxonomic scope" value="Eukaryota"/>
</dbReference>
<dbReference type="GeneTree" id="ENSGT00390000007623"/>
<dbReference type="HOGENOM" id="CLU_1323584_0_0_1"/>
<dbReference type="InParanoid" id="Q9CQS3"/>
<dbReference type="OMA" id="CHGYFDG"/>
<dbReference type="OrthoDB" id="9434858at2759"/>
<dbReference type="PhylomeDB" id="Q9CQS3"/>
<dbReference type="TreeFam" id="TF331989"/>
<dbReference type="BioGRID-ORCS" id="67606">
    <property type="hits" value="4 hits in 79 CRISPR screens"/>
</dbReference>
<dbReference type="PRO" id="PR:Q9CQS3"/>
<dbReference type="Proteomes" id="UP000000589">
    <property type="component" value="Chromosome 2"/>
</dbReference>
<dbReference type="RNAct" id="Q9CQS3">
    <property type="molecule type" value="protein"/>
</dbReference>
<dbReference type="Bgee" id="ENSMUSG00000074971">
    <property type="expression patterns" value="Expressed in humerus cartilage element and 158 other cell types or tissues"/>
</dbReference>
<dbReference type="GO" id="GO:0005783">
    <property type="term" value="C:endoplasmic reticulum"/>
    <property type="evidence" value="ECO:0000314"/>
    <property type="project" value="MGI"/>
</dbReference>
<dbReference type="GO" id="GO:0005576">
    <property type="term" value="C:extracellular region"/>
    <property type="evidence" value="ECO:0007669"/>
    <property type="project" value="UniProtKB-SubCell"/>
</dbReference>
<dbReference type="GO" id="GO:0005794">
    <property type="term" value="C:Golgi apparatus"/>
    <property type="evidence" value="ECO:0007669"/>
    <property type="project" value="UniProtKB-SubCell"/>
</dbReference>
<dbReference type="GO" id="GO:0042803">
    <property type="term" value="F:protein homodimerization activity"/>
    <property type="evidence" value="ECO:0000314"/>
    <property type="project" value="UniProtKB"/>
</dbReference>
<dbReference type="InterPro" id="IPR026772">
    <property type="entry name" value="Fibin"/>
</dbReference>
<dbReference type="PANTHER" id="PTHR31185">
    <property type="entry name" value="FIN BUD INITIATION FACTOR FIBIN"/>
    <property type="match status" value="1"/>
</dbReference>
<dbReference type="PANTHER" id="PTHR31185:SF0">
    <property type="entry name" value="FIN BUD INITIATION FACTOR HOMOLOG"/>
    <property type="match status" value="1"/>
</dbReference>
<dbReference type="Pfam" id="PF15819">
    <property type="entry name" value="Fibin"/>
    <property type="match status" value="1"/>
</dbReference>
<feature type="signal peptide" evidence="1">
    <location>
        <begin position="1"/>
        <end position="18"/>
    </location>
</feature>
<feature type="chain" id="PRO_0000349212" description="Fin bud initiation factor homolog">
    <location>
        <begin position="19"/>
        <end position="217"/>
    </location>
</feature>
<feature type="glycosylation site" description="N-linked (GlcNAc...) asparagine" evidence="2">
    <location>
        <position position="30"/>
    </location>
</feature>
<feature type="disulfide bond" description="Interchain" evidence="1">
    <location>
        <position position="52"/>
    </location>
</feature>
<feature type="disulfide bond" description="Interchain" evidence="1">
    <location>
        <position position="64"/>
    </location>
</feature>
<comment type="subunit">
    <text evidence="1">Homodimer; disulfide-linked. Seems to also exist as monomers (By similarity).</text>
</comment>
<comment type="subcellular location">
    <subcellularLocation>
        <location evidence="1">Secreted</location>
    </subcellularLocation>
    <subcellularLocation>
        <location evidence="1">Golgi apparatus</location>
    </subcellularLocation>
    <subcellularLocation>
        <location evidence="1">Endoplasmic reticulum</location>
    </subcellularLocation>
</comment>
<comment type="developmental stage">
    <text evidence="3">At 9.5 dpc and 10.5 dpc, abundantly expressed in the forelimb buds.</text>
</comment>
<comment type="similarity">
    <text evidence="4">Belongs to the FIBIN family.</text>
</comment>
<protein>
    <recommendedName>
        <fullName>Fin bud initiation factor homolog</fullName>
    </recommendedName>
</protein>